<reference key="1">
    <citation type="journal article" date="2009" name="PLoS Genet.">
        <title>The complete genome and proteome of Laribacter hongkongensis reveal potential mechanisms for adaptations to different temperatures and habitats.</title>
        <authorList>
            <person name="Woo P.C.Y."/>
            <person name="Lau S.K.P."/>
            <person name="Tse H."/>
            <person name="Teng J.L.L."/>
            <person name="Curreem S.O."/>
            <person name="Tsang A.K.L."/>
            <person name="Fan R.Y.Y."/>
            <person name="Wong G.K.M."/>
            <person name="Huang Y."/>
            <person name="Loman N.J."/>
            <person name="Snyder L.A.S."/>
            <person name="Cai J.J."/>
            <person name="Huang J.-D."/>
            <person name="Mak W."/>
            <person name="Pallen M.J."/>
            <person name="Lok S."/>
            <person name="Yuen K.-Y."/>
        </authorList>
    </citation>
    <scope>NUCLEOTIDE SEQUENCE [LARGE SCALE GENOMIC DNA]</scope>
    <source>
        <strain>HLHK9</strain>
    </source>
</reference>
<dbReference type="EC" id="2.7.7.87" evidence="1"/>
<dbReference type="EMBL" id="CP001154">
    <property type="protein sequence ID" value="ACO73048.1"/>
    <property type="molecule type" value="Genomic_DNA"/>
</dbReference>
<dbReference type="RefSeq" id="WP_012695543.1">
    <property type="nucleotide sequence ID" value="NC_012559.1"/>
</dbReference>
<dbReference type="SMR" id="C1D9T5"/>
<dbReference type="STRING" id="557598.LHK_00052"/>
<dbReference type="KEGG" id="lhk:LHK_00052"/>
<dbReference type="eggNOG" id="COG0009">
    <property type="taxonomic scope" value="Bacteria"/>
</dbReference>
<dbReference type="HOGENOM" id="CLU_031397_6_1_4"/>
<dbReference type="Proteomes" id="UP000002010">
    <property type="component" value="Chromosome"/>
</dbReference>
<dbReference type="GO" id="GO:0005737">
    <property type="term" value="C:cytoplasm"/>
    <property type="evidence" value="ECO:0007669"/>
    <property type="project" value="UniProtKB-SubCell"/>
</dbReference>
<dbReference type="GO" id="GO:0005524">
    <property type="term" value="F:ATP binding"/>
    <property type="evidence" value="ECO:0007669"/>
    <property type="project" value="UniProtKB-UniRule"/>
</dbReference>
<dbReference type="GO" id="GO:0003725">
    <property type="term" value="F:double-stranded RNA binding"/>
    <property type="evidence" value="ECO:0007669"/>
    <property type="project" value="InterPro"/>
</dbReference>
<dbReference type="GO" id="GO:0061710">
    <property type="term" value="F:L-threonylcarbamoyladenylate synthase"/>
    <property type="evidence" value="ECO:0007669"/>
    <property type="project" value="UniProtKB-EC"/>
</dbReference>
<dbReference type="GO" id="GO:0000049">
    <property type="term" value="F:tRNA binding"/>
    <property type="evidence" value="ECO:0007669"/>
    <property type="project" value="TreeGrafter"/>
</dbReference>
<dbReference type="GO" id="GO:0006450">
    <property type="term" value="P:regulation of translational fidelity"/>
    <property type="evidence" value="ECO:0007669"/>
    <property type="project" value="TreeGrafter"/>
</dbReference>
<dbReference type="GO" id="GO:0002949">
    <property type="term" value="P:tRNA threonylcarbamoyladenosine modification"/>
    <property type="evidence" value="ECO:0007669"/>
    <property type="project" value="UniProtKB-UniRule"/>
</dbReference>
<dbReference type="Gene3D" id="3.90.870.10">
    <property type="entry name" value="DHBP synthase"/>
    <property type="match status" value="1"/>
</dbReference>
<dbReference type="HAMAP" id="MF_01852">
    <property type="entry name" value="TsaC"/>
    <property type="match status" value="1"/>
</dbReference>
<dbReference type="InterPro" id="IPR017945">
    <property type="entry name" value="DHBP_synth_RibB-like_a/b_dom"/>
</dbReference>
<dbReference type="InterPro" id="IPR006070">
    <property type="entry name" value="Sua5-like_dom"/>
</dbReference>
<dbReference type="InterPro" id="IPR023535">
    <property type="entry name" value="TC-AMP_synthase"/>
</dbReference>
<dbReference type="InterPro" id="IPR050156">
    <property type="entry name" value="TC-AMP_synthase_SUA5"/>
</dbReference>
<dbReference type="PANTHER" id="PTHR17490">
    <property type="entry name" value="SUA5"/>
    <property type="match status" value="1"/>
</dbReference>
<dbReference type="PANTHER" id="PTHR17490:SF18">
    <property type="entry name" value="THREONYLCARBAMOYL-AMP SYNTHASE"/>
    <property type="match status" value="1"/>
</dbReference>
<dbReference type="Pfam" id="PF01300">
    <property type="entry name" value="Sua5_yciO_yrdC"/>
    <property type="match status" value="1"/>
</dbReference>
<dbReference type="SUPFAM" id="SSF55821">
    <property type="entry name" value="YrdC/RibB"/>
    <property type="match status" value="1"/>
</dbReference>
<dbReference type="PROSITE" id="PS51163">
    <property type="entry name" value="YRDC"/>
    <property type="match status" value="1"/>
</dbReference>
<sequence length="185" mass="20128">MFRALPAAQRRAARAHLRAGGVLAYATESCFGLGCLPGNARGLRTILRLKGRPNHKGMIVVGRRFADLRRLVRPVDAAGQARLMSRWPGPTTFLLPADRRVLPLLRGRHRTLAVRVSAHHGVAMLTRDLGPLVSTSANFAGKVSLKNAAACRRTFGQEVMVLPGRTGRARRPSAIIDFASGRVLR</sequence>
<keyword id="KW-0067">ATP-binding</keyword>
<keyword id="KW-0963">Cytoplasm</keyword>
<keyword id="KW-0547">Nucleotide-binding</keyword>
<keyword id="KW-0548">Nucleotidyltransferase</keyword>
<keyword id="KW-1185">Reference proteome</keyword>
<keyword id="KW-0808">Transferase</keyword>
<keyword id="KW-0819">tRNA processing</keyword>
<name>TSAC_LARHH</name>
<comment type="function">
    <text evidence="1">Required for the formation of a threonylcarbamoyl group on adenosine at position 37 (t(6)A37) in tRNAs that read codons beginning with adenine. Catalyzes the conversion of L-threonine, HCO(3)(-)/CO(2) and ATP to give threonylcarbamoyl-AMP (TC-AMP) as the acyladenylate intermediate, with the release of diphosphate.</text>
</comment>
<comment type="catalytic activity">
    <reaction evidence="1">
        <text>L-threonine + hydrogencarbonate + ATP = L-threonylcarbamoyladenylate + diphosphate + H2O</text>
        <dbReference type="Rhea" id="RHEA:36407"/>
        <dbReference type="ChEBI" id="CHEBI:15377"/>
        <dbReference type="ChEBI" id="CHEBI:17544"/>
        <dbReference type="ChEBI" id="CHEBI:30616"/>
        <dbReference type="ChEBI" id="CHEBI:33019"/>
        <dbReference type="ChEBI" id="CHEBI:57926"/>
        <dbReference type="ChEBI" id="CHEBI:73682"/>
        <dbReference type="EC" id="2.7.7.87"/>
    </reaction>
</comment>
<comment type="subcellular location">
    <subcellularLocation>
        <location evidence="1">Cytoplasm</location>
    </subcellularLocation>
</comment>
<comment type="similarity">
    <text evidence="1">Belongs to the SUA5 family. TsaC subfamily.</text>
</comment>
<proteinExistence type="inferred from homology"/>
<protein>
    <recommendedName>
        <fullName evidence="1">Threonylcarbamoyl-AMP synthase</fullName>
        <shortName evidence="1">TC-AMP synthase</shortName>
        <ecNumber evidence="1">2.7.7.87</ecNumber>
    </recommendedName>
    <alternativeName>
        <fullName evidence="1">L-threonylcarbamoyladenylate synthase</fullName>
    </alternativeName>
    <alternativeName>
        <fullName evidence="1">t(6)A37 threonylcarbamoyladenosine biosynthesis protein TsaC</fullName>
    </alternativeName>
    <alternativeName>
        <fullName evidence="1">tRNA threonylcarbamoyladenosine biosynthesis protein TsaC</fullName>
    </alternativeName>
</protein>
<gene>
    <name evidence="1" type="primary">tsaC</name>
    <name type="synonym">rimN</name>
    <name type="ordered locus">LHK_00052</name>
</gene>
<organism>
    <name type="scientific">Laribacter hongkongensis (strain HLHK9)</name>
    <dbReference type="NCBI Taxonomy" id="557598"/>
    <lineage>
        <taxon>Bacteria</taxon>
        <taxon>Pseudomonadati</taxon>
        <taxon>Pseudomonadota</taxon>
        <taxon>Betaproteobacteria</taxon>
        <taxon>Neisseriales</taxon>
        <taxon>Aquaspirillaceae</taxon>
        <taxon>Laribacter</taxon>
    </lineage>
</organism>
<accession>C1D9T5</accession>
<evidence type="ECO:0000255" key="1">
    <source>
        <dbReference type="HAMAP-Rule" id="MF_01852"/>
    </source>
</evidence>
<feature type="chain" id="PRO_0000403978" description="Threonylcarbamoyl-AMP synthase">
    <location>
        <begin position="1"/>
        <end position="185"/>
    </location>
</feature>
<feature type="domain" description="YrdC-like" evidence="1">
    <location>
        <begin position="7"/>
        <end position="185"/>
    </location>
</feature>